<reference key="1">
    <citation type="journal article" date="2000" name="Nature">
        <title>Sequence and analysis of chromosome 3 of the plant Arabidopsis thaliana.</title>
        <authorList>
            <person name="Salanoubat M."/>
            <person name="Lemcke K."/>
            <person name="Rieger M."/>
            <person name="Ansorge W."/>
            <person name="Unseld M."/>
            <person name="Fartmann B."/>
            <person name="Valle G."/>
            <person name="Bloecker H."/>
            <person name="Perez-Alonso M."/>
            <person name="Obermaier B."/>
            <person name="Delseny M."/>
            <person name="Boutry M."/>
            <person name="Grivell L.A."/>
            <person name="Mache R."/>
            <person name="Puigdomenech P."/>
            <person name="De Simone V."/>
            <person name="Choisne N."/>
            <person name="Artiguenave F."/>
            <person name="Robert C."/>
            <person name="Brottier P."/>
            <person name="Wincker P."/>
            <person name="Cattolico L."/>
            <person name="Weissenbach J."/>
            <person name="Saurin W."/>
            <person name="Quetier F."/>
            <person name="Schaefer M."/>
            <person name="Mueller-Auer S."/>
            <person name="Gabel C."/>
            <person name="Fuchs M."/>
            <person name="Benes V."/>
            <person name="Wurmbach E."/>
            <person name="Drzonek H."/>
            <person name="Erfle H."/>
            <person name="Jordan N."/>
            <person name="Bangert S."/>
            <person name="Wiedelmann R."/>
            <person name="Kranz H."/>
            <person name="Voss H."/>
            <person name="Holland R."/>
            <person name="Brandt P."/>
            <person name="Nyakatura G."/>
            <person name="Vezzi A."/>
            <person name="D'Angelo M."/>
            <person name="Pallavicini A."/>
            <person name="Toppo S."/>
            <person name="Simionati B."/>
            <person name="Conrad A."/>
            <person name="Hornischer K."/>
            <person name="Kauer G."/>
            <person name="Loehnert T.-H."/>
            <person name="Nordsiek G."/>
            <person name="Reichelt J."/>
            <person name="Scharfe M."/>
            <person name="Schoen O."/>
            <person name="Bargues M."/>
            <person name="Terol J."/>
            <person name="Climent J."/>
            <person name="Navarro P."/>
            <person name="Collado C."/>
            <person name="Perez-Perez A."/>
            <person name="Ottenwaelder B."/>
            <person name="Duchemin D."/>
            <person name="Cooke R."/>
            <person name="Laudie M."/>
            <person name="Berger-Llauro C."/>
            <person name="Purnelle B."/>
            <person name="Masuy D."/>
            <person name="de Haan M."/>
            <person name="Maarse A.C."/>
            <person name="Alcaraz J.-P."/>
            <person name="Cottet A."/>
            <person name="Casacuberta E."/>
            <person name="Monfort A."/>
            <person name="Argiriou A."/>
            <person name="Flores M."/>
            <person name="Liguori R."/>
            <person name="Vitale D."/>
            <person name="Mannhaupt G."/>
            <person name="Haase D."/>
            <person name="Schoof H."/>
            <person name="Rudd S."/>
            <person name="Zaccaria P."/>
            <person name="Mewes H.-W."/>
            <person name="Mayer K.F.X."/>
            <person name="Kaul S."/>
            <person name="Town C.D."/>
            <person name="Koo H.L."/>
            <person name="Tallon L.J."/>
            <person name="Jenkins J."/>
            <person name="Rooney T."/>
            <person name="Rizzo M."/>
            <person name="Walts A."/>
            <person name="Utterback T."/>
            <person name="Fujii C.Y."/>
            <person name="Shea T.P."/>
            <person name="Creasy T.H."/>
            <person name="Haas B."/>
            <person name="Maiti R."/>
            <person name="Wu D."/>
            <person name="Peterson J."/>
            <person name="Van Aken S."/>
            <person name="Pai G."/>
            <person name="Militscher J."/>
            <person name="Sellers P."/>
            <person name="Gill J.E."/>
            <person name="Feldblyum T.V."/>
            <person name="Preuss D."/>
            <person name="Lin X."/>
            <person name="Nierman W.C."/>
            <person name="Salzberg S.L."/>
            <person name="White O."/>
            <person name="Venter J.C."/>
            <person name="Fraser C.M."/>
            <person name="Kaneko T."/>
            <person name="Nakamura Y."/>
            <person name="Sato S."/>
            <person name="Kato T."/>
            <person name="Asamizu E."/>
            <person name="Sasamoto S."/>
            <person name="Kimura T."/>
            <person name="Idesawa K."/>
            <person name="Kawashima K."/>
            <person name="Kishida Y."/>
            <person name="Kiyokawa C."/>
            <person name="Kohara M."/>
            <person name="Matsumoto M."/>
            <person name="Matsuno A."/>
            <person name="Muraki A."/>
            <person name="Nakayama S."/>
            <person name="Nakazaki N."/>
            <person name="Shinpo S."/>
            <person name="Takeuchi C."/>
            <person name="Wada T."/>
            <person name="Watanabe A."/>
            <person name="Yamada M."/>
            <person name="Yasuda M."/>
            <person name="Tabata S."/>
        </authorList>
    </citation>
    <scope>NUCLEOTIDE SEQUENCE [LARGE SCALE GENOMIC DNA]</scope>
    <source>
        <strain>cv. Columbia</strain>
    </source>
</reference>
<reference key="2">
    <citation type="journal article" date="2017" name="Plant J.">
        <title>Araport11: a complete reannotation of the Arabidopsis thaliana reference genome.</title>
        <authorList>
            <person name="Cheng C.Y."/>
            <person name="Krishnakumar V."/>
            <person name="Chan A.P."/>
            <person name="Thibaud-Nissen F."/>
            <person name="Schobel S."/>
            <person name="Town C.D."/>
        </authorList>
    </citation>
    <scope>GENOME REANNOTATION</scope>
    <source>
        <strain>cv. Columbia</strain>
    </source>
</reference>
<reference key="3">
    <citation type="journal article" date="2004" name="Plant Cell">
        <title>Genome-wide analysis of Arabidopsis pentatricopeptide repeat proteins reveals their essential role in organelle biogenesis.</title>
        <authorList>
            <person name="Lurin C."/>
            <person name="Andres C."/>
            <person name="Aubourg S."/>
            <person name="Bellaoui M."/>
            <person name="Bitton F."/>
            <person name="Bruyere C."/>
            <person name="Caboche M."/>
            <person name="Debast C."/>
            <person name="Gualberto J."/>
            <person name="Hoffmann B."/>
            <person name="Lecharny A."/>
            <person name="Le Ret M."/>
            <person name="Martin-Magniette M.-L."/>
            <person name="Mireau H."/>
            <person name="Peeters N."/>
            <person name="Renou J.-P."/>
            <person name="Szurek B."/>
            <person name="Taconnat L."/>
            <person name="Small I."/>
        </authorList>
    </citation>
    <scope>GENE FAMILY</scope>
</reference>
<keyword id="KW-1185">Reference proteome</keyword>
<keyword id="KW-0677">Repeat</keyword>
<proteinExistence type="evidence at transcript level"/>
<dbReference type="EMBL" id="AC016827">
    <property type="protein sequence ID" value="AAF26996.1"/>
    <property type="molecule type" value="Genomic_DNA"/>
</dbReference>
<dbReference type="EMBL" id="CP002686">
    <property type="protein sequence ID" value="AEE74476.1"/>
    <property type="molecule type" value="Genomic_DNA"/>
</dbReference>
<dbReference type="RefSeq" id="NP_001319489.1">
    <property type="nucleotide sequence ID" value="NM_001337682.1"/>
</dbReference>
<dbReference type="SMR" id="Q9M907"/>
<dbReference type="FunCoup" id="Q9M907">
    <property type="interactions" value="148"/>
</dbReference>
<dbReference type="PaxDb" id="3702-AT3G06920.1"/>
<dbReference type="ProteomicsDB" id="248942"/>
<dbReference type="EnsemblPlants" id="AT3G06920.1">
    <property type="protein sequence ID" value="AT3G06920.1"/>
    <property type="gene ID" value="AT3G06920"/>
</dbReference>
<dbReference type="GeneID" id="819877"/>
<dbReference type="Gramene" id="AT3G06920.1">
    <property type="protein sequence ID" value="AT3G06920.1"/>
    <property type="gene ID" value="AT3G06920"/>
</dbReference>
<dbReference type="KEGG" id="ath:AT3G06920"/>
<dbReference type="Araport" id="AT3G06920"/>
<dbReference type="TAIR" id="AT3G06920"/>
<dbReference type="eggNOG" id="KOG4197">
    <property type="taxonomic scope" value="Eukaryota"/>
</dbReference>
<dbReference type="HOGENOM" id="CLU_002706_49_12_1"/>
<dbReference type="InParanoid" id="Q9M907"/>
<dbReference type="OMA" id="CYNTMIE"/>
<dbReference type="OrthoDB" id="185373at2759"/>
<dbReference type="PhylomeDB" id="Q9M907"/>
<dbReference type="PRO" id="PR:Q9M907"/>
<dbReference type="Proteomes" id="UP000006548">
    <property type="component" value="Chromosome 3"/>
</dbReference>
<dbReference type="ExpressionAtlas" id="Q9M907">
    <property type="expression patterns" value="baseline and differential"/>
</dbReference>
<dbReference type="Gene3D" id="1.25.40.10">
    <property type="entry name" value="Tetratricopeptide repeat domain"/>
    <property type="match status" value="7"/>
</dbReference>
<dbReference type="InterPro" id="IPR002885">
    <property type="entry name" value="Pentatricopeptide_rpt"/>
</dbReference>
<dbReference type="InterPro" id="IPR050872">
    <property type="entry name" value="PPR_P_subfamily"/>
</dbReference>
<dbReference type="InterPro" id="IPR011990">
    <property type="entry name" value="TPR-like_helical_dom_sf"/>
</dbReference>
<dbReference type="NCBIfam" id="TIGR00756">
    <property type="entry name" value="PPR"/>
    <property type="match status" value="19"/>
</dbReference>
<dbReference type="PANTHER" id="PTHR46128">
    <property type="entry name" value="MITOCHONDRIAL GROUP I INTRON SPLICING FACTOR CCM1"/>
    <property type="match status" value="1"/>
</dbReference>
<dbReference type="PANTHER" id="PTHR46128:SF82">
    <property type="entry name" value="PENTACOTRIPEPTIDE-REPEAT REGION OF PRORP DOMAIN-CONTAINING PROTEIN"/>
    <property type="match status" value="1"/>
</dbReference>
<dbReference type="Pfam" id="PF01535">
    <property type="entry name" value="PPR"/>
    <property type="match status" value="2"/>
</dbReference>
<dbReference type="Pfam" id="PF12854">
    <property type="entry name" value="PPR_1"/>
    <property type="match status" value="4"/>
</dbReference>
<dbReference type="Pfam" id="PF13041">
    <property type="entry name" value="PPR_2"/>
    <property type="match status" value="6"/>
</dbReference>
<dbReference type="Pfam" id="PF13812">
    <property type="entry name" value="PPR_3"/>
    <property type="match status" value="1"/>
</dbReference>
<dbReference type="SUPFAM" id="SSF48452">
    <property type="entry name" value="TPR-like"/>
    <property type="match status" value="1"/>
</dbReference>
<dbReference type="PROSITE" id="PS51375">
    <property type="entry name" value="PPR"/>
    <property type="match status" value="21"/>
</dbReference>
<sequence>MVGFARTKFCKNLSSLSDNGENHEKPYTFEGNRQTVNDICNVLETGPWGPSAENTLSALSFKPQPEFVIGVLRRLKDVNRAIEYFRWYERRTELPHCPESYNSLLLVMARCRNFDALDQILGEMSVAGFGPSVNTCIEMVLGCVKANKLREGYDVVQMMRKFKFRPAFSAYTTLIGAFSAVNHSDMMLTLFQQMQELGYEPTVHLFTTLIRGFAKEGRVDSALSLLDEMKSSSLDADIVLYNVCIDSFGKVGKVDMAWKFFHEIEANGLKPDEVTYTSMIGVLCKANRLDEAVEMFEHLEKNRRVPCTYAYNTMIMGYGSAGKFDEAYSLLERQRAKGSIPSVIAYNCILTCLRKMGKVDEALKVFEEMKKDAAPNLSTYNILIDMLCRAGKLDTAFELRDSMQKAGLFPNVRTVNIMVDRLCKSQKLDEACAMFEEMDYKVCTPDEITFCSLIDGLGKVGRVDDAYKVYEKMLDSDCRTNSIVYTSLIKNFFNHGRKEDGHKIYKDMINQNCSPDLQLLNTYMDCMFKAGEPEKGRAMFEEIKARRFVPDARSYSILIHGLIKAGFANETYELFYSMKEQGCVLDTRAYNIVIDGFCKCGKVNKAYQLLEEMKTKGFEPTVVTYGSVIDGLAKIDRLDEAYMLFEEAKSKRIELNVVIYSSLIDGFGKVGRIDEAYLILEELMQKGLTPNLYTWNSLLDALVKAEEINEALVCFQSMKELKCTPNQVTYGILINGLCKVRKFNKAFVFWQEMQKQGMKPSTISYTTMISGLAKAGNIAEAGALFDRFKANGGVPDSACYNAMIEGLSNGNRAMDAFSLFEETRRRGLPIHNKTCVVLLDTLHKNDCLEQAAIVGAVLRETGKARHAARSW</sequence>
<organism>
    <name type="scientific">Arabidopsis thaliana</name>
    <name type="common">Mouse-ear cress</name>
    <dbReference type="NCBI Taxonomy" id="3702"/>
    <lineage>
        <taxon>Eukaryota</taxon>
        <taxon>Viridiplantae</taxon>
        <taxon>Streptophyta</taxon>
        <taxon>Embryophyta</taxon>
        <taxon>Tracheophyta</taxon>
        <taxon>Spermatophyta</taxon>
        <taxon>Magnoliopsida</taxon>
        <taxon>eudicotyledons</taxon>
        <taxon>Gunneridae</taxon>
        <taxon>Pentapetalae</taxon>
        <taxon>rosids</taxon>
        <taxon>malvids</taxon>
        <taxon>Brassicales</taxon>
        <taxon>Brassicaceae</taxon>
        <taxon>Camelineae</taxon>
        <taxon>Arabidopsis</taxon>
    </lineage>
</organism>
<evidence type="ECO:0000305" key="1"/>
<gene>
    <name type="ordered locus">At3g06920</name>
    <name type="ORF">F17A9.7</name>
</gene>
<comment type="similarity">
    <text evidence="1">Belongs to the PPR family. P subfamily.</text>
</comment>
<comment type="online information" name="Pentatricopeptide repeat proteins">
    <link uri="https://ppr.plantenergy.uwa.edu.au"/>
</comment>
<name>PP217_ARATH</name>
<protein>
    <recommendedName>
        <fullName>Pentatricopeptide repeat-containing protein At3g06920</fullName>
    </recommendedName>
</protein>
<feature type="chain" id="PRO_0000356076" description="Pentatricopeptide repeat-containing protein At3g06920">
    <location>
        <begin position="1"/>
        <end position="871"/>
    </location>
</feature>
<feature type="repeat" description="PPR 1">
    <location>
        <begin position="97"/>
        <end position="131"/>
    </location>
</feature>
<feature type="repeat" description="PPR 2">
    <location>
        <begin position="132"/>
        <end position="166"/>
    </location>
</feature>
<feature type="repeat" description="PPR 3">
    <location>
        <begin position="167"/>
        <end position="201"/>
    </location>
</feature>
<feature type="repeat" description="PPR 4">
    <location>
        <begin position="202"/>
        <end position="236"/>
    </location>
</feature>
<feature type="repeat" description="PPR 5">
    <location>
        <begin position="237"/>
        <end position="271"/>
    </location>
</feature>
<feature type="repeat" description="PPR 6">
    <location>
        <begin position="272"/>
        <end position="306"/>
    </location>
</feature>
<feature type="repeat" description="PPR 7">
    <location>
        <begin position="307"/>
        <end position="341"/>
    </location>
</feature>
<feature type="repeat" description="PPR 8">
    <location>
        <begin position="342"/>
        <end position="372"/>
    </location>
</feature>
<feature type="repeat" description="PPR 9">
    <location>
        <begin position="376"/>
        <end position="410"/>
    </location>
</feature>
<feature type="repeat" description="PPR 10">
    <location>
        <begin position="411"/>
        <end position="445"/>
    </location>
</feature>
<feature type="repeat" description="PPR 11">
    <location>
        <begin position="446"/>
        <end position="480"/>
    </location>
</feature>
<feature type="repeat" description="PPR 12">
    <location>
        <begin position="481"/>
        <end position="515"/>
    </location>
</feature>
<feature type="repeat" description="PPR 13">
    <location>
        <begin position="516"/>
        <end position="550"/>
    </location>
</feature>
<feature type="repeat" description="PPR 14">
    <location>
        <begin position="551"/>
        <end position="585"/>
    </location>
</feature>
<feature type="repeat" description="PPR 15">
    <location>
        <begin position="586"/>
        <end position="620"/>
    </location>
</feature>
<feature type="repeat" description="PPR 16">
    <location>
        <begin position="621"/>
        <end position="655"/>
    </location>
</feature>
<feature type="repeat" description="PPR 17">
    <location>
        <begin position="656"/>
        <end position="690"/>
    </location>
</feature>
<feature type="repeat" description="PPR 18">
    <location>
        <begin position="691"/>
        <end position="725"/>
    </location>
</feature>
<feature type="repeat" description="PPR 19">
    <location>
        <begin position="726"/>
        <end position="760"/>
    </location>
</feature>
<feature type="repeat" description="PPR 20">
    <location>
        <begin position="761"/>
        <end position="795"/>
    </location>
</feature>
<feature type="repeat" description="PPR 21">
    <location>
        <begin position="796"/>
        <end position="830"/>
    </location>
</feature>
<accession>Q9M907</accession>